<accession>Q8CVG5</accession>
<reference key="1">
    <citation type="journal article" date="2002" name="Proc. Natl. Acad. Sci. U.S.A.">
        <title>Extensive mosaic structure revealed by the complete genome sequence of uropathogenic Escherichia coli.</title>
        <authorList>
            <person name="Welch R.A."/>
            <person name="Burland V."/>
            <person name="Plunkett G. III"/>
            <person name="Redford P."/>
            <person name="Roesch P."/>
            <person name="Rasko D."/>
            <person name="Buckles E.L."/>
            <person name="Liou S.-R."/>
            <person name="Boutin A."/>
            <person name="Hackett J."/>
            <person name="Stroud D."/>
            <person name="Mayhew G.F."/>
            <person name="Rose D.J."/>
            <person name="Zhou S."/>
            <person name="Schwartz D.C."/>
            <person name="Perna N.T."/>
            <person name="Mobley H.L.T."/>
            <person name="Donnenberg M.S."/>
            <person name="Blattner F.R."/>
        </authorList>
    </citation>
    <scope>NUCLEOTIDE SEQUENCE [LARGE SCALE GENOMIC DNA]</scope>
    <source>
        <strain>CFT073 / ATCC 700928 / UPEC</strain>
    </source>
</reference>
<gene>
    <name evidence="1" type="primary">nanM2</name>
    <name type="ordered locus">c5388</name>
</gene>
<feature type="signal peptide" evidence="1">
    <location>
        <begin position="1"/>
        <end position="19"/>
    </location>
</feature>
<feature type="chain" id="PRO_0000333058" description="N-acetylneuraminate epimerase 2">
    <location>
        <begin position="20"/>
        <end position="368"/>
    </location>
</feature>
<feature type="repeat" description="Kelch 1">
    <location>
        <begin position="40"/>
        <end position="84"/>
    </location>
</feature>
<feature type="repeat" description="Kelch 2">
    <location>
        <begin position="86"/>
        <end position="137"/>
    </location>
</feature>
<feature type="repeat" description="Kelch 3">
    <location>
        <begin position="139"/>
        <end position="173"/>
    </location>
</feature>
<feature type="repeat" description="Kelch 4">
    <location>
        <begin position="174"/>
        <end position="219"/>
    </location>
</feature>
<feature type="repeat" description="Kelch 5">
    <location>
        <begin position="222"/>
        <end position="265"/>
    </location>
</feature>
<feature type="repeat" description="Kelch 6">
    <location>
        <begin position="287"/>
        <end position="336"/>
    </location>
</feature>
<feature type="repeat" description="Kelch 7">
    <location>
        <begin position="338"/>
        <end position="367"/>
    </location>
</feature>
<feature type="active site" description="Proton acceptor" evidence="1">
    <location>
        <position position="228"/>
    </location>
</feature>
<protein>
    <recommendedName>
        <fullName evidence="1">N-acetylneuraminate epimerase 2</fullName>
        <ecNumber evidence="1">5.1.3.24</ecNumber>
    </recommendedName>
    <alternativeName>
        <fullName evidence="1">N-acetylneuraminate mutarotase 2</fullName>
        <shortName evidence="1">Neu5Ac mutarotase 2</shortName>
    </alternativeName>
    <alternativeName>
        <fullName evidence="1">Sialic acid epimerase 2</fullName>
    </alternativeName>
</protein>
<sequence length="368" mass="39580">MNKTITALAILMASFAANASVLPETPVPFKSGTGVIDNDTVYIGLGSAGTAWYKLDTQAKDKRWTALAAFPGGPRDQATSAFIDGNLYVFGGIGKNSEGLTQVFNDVHKYNPKTNSWVKLMSHAPMGMAGHVTFVHNGKAYVTGGVNQNIFNGYFEDLNEAGKDSTAIDKINAYYFDKKAEDYFFNKFLLSFDPSTQQWSYAGESPWYGTAGAAVVNKGDKTWLINGEAKPGLRTDAVFELDFTGNNLKWNKLAPVASPDGVAGGFAGMSNDSLIFAGGAGFKGSRENYQNGKNYAHEGLKKSYSADIHLWHNGKWDKSGELSQGRAYGVSLLWNNSLLIIGGEAAGGKAVTDSVLISVKDNKVTVQN</sequence>
<evidence type="ECO:0000255" key="1">
    <source>
        <dbReference type="HAMAP-Rule" id="MF_01195"/>
    </source>
</evidence>
<evidence type="ECO:0000305" key="2"/>
<organism>
    <name type="scientific">Escherichia coli O6:H1 (strain CFT073 / ATCC 700928 / UPEC)</name>
    <dbReference type="NCBI Taxonomy" id="199310"/>
    <lineage>
        <taxon>Bacteria</taxon>
        <taxon>Pseudomonadati</taxon>
        <taxon>Pseudomonadota</taxon>
        <taxon>Gammaproteobacteria</taxon>
        <taxon>Enterobacterales</taxon>
        <taxon>Enterobacteriaceae</taxon>
        <taxon>Escherichia</taxon>
    </lineage>
</organism>
<name>NANM2_ECOL6</name>
<keyword id="KW-0119">Carbohydrate metabolism</keyword>
<keyword id="KW-0413">Isomerase</keyword>
<keyword id="KW-0880">Kelch repeat</keyword>
<keyword id="KW-0574">Periplasm</keyword>
<keyword id="KW-1185">Reference proteome</keyword>
<keyword id="KW-0677">Repeat</keyword>
<keyword id="KW-0732">Signal</keyword>
<proteinExistence type="inferred from homology"/>
<comment type="function">
    <text evidence="1">Converts alpha-N-acetylneuranimic acid (Neu5Ac) to the beta-anomer, accelerating the equilibrium between the alpha- and beta-anomers. Probably facilitates sialidase-negative bacteria to compete successfully for limited amounts of extracellular Neu5Ac, which is likely taken up in the beta-anomer. In addition, the rapid removal of sialic acid from solution might be advantageous to the bacterium to damp down host responses.</text>
</comment>
<comment type="catalytic activity">
    <reaction evidence="1">
        <text>N-acetyl-alpha-neuraminate = N-acetyl-beta-neuraminate</text>
        <dbReference type="Rhea" id="RHEA:25233"/>
        <dbReference type="ChEBI" id="CHEBI:58705"/>
        <dbReference type="ChEBI" id="CHEBI:58770"/>
        <dbReference type="EC" id="5.1.3.24"/>
    </reaction>
</comment>
<comment type="subunit">
    <text evidence="1">Homodimer.</text>
</comment>
<comment type="subcellular location">
    <subcellularLocation>
        <location evidence="1">Periplasm</location>
    </subcellularLocation>
</comment>
<comment type="similarity">
    <text evidence="1">Belongs to the NanM family.</text>
</comment>
<comment type="sequence caution" evidence="2">
    <conflict type="erroneous initiation">
        <sequence resource="EMBL-CDS" id="AAN83810"/>
    </conflict>
</comment>
<dbReference type="EC" id="5.1.3.24" evidence="1"/>
<dbReference type="EMBL" id="AE014075">
    <property type="protein sequence ID" value="AAN83810.1"/>
    <property type="status" value="ALT_INIT"/>
    <property type="molecule type" value="Genomic_DNA"/>
</dbReference>
<dbReference type="SMR" id="Q8CVG5"/>
<dbReference type="STRING" id="199310.c5388"/>
<dbReference type="KEGG" id="ecc:c5388"/>
<dbReference type="eggNOG" id="COG3055">
    <property type="taxonomic scope" value="Bacteria"/>
</dbReference>
<dbReference type="HOGENOM" id="CLU_061535_0_0_6"/>
<dbReference type="Proteomes" id="UP000001410">
    <property type="component" value="Chromosome"/>
</dbReference>
<dbReference type="GO" id="GO:0042597">
    <property type="term" value="C:periplasmic space"/>
    <property type="evidence" value="ECO:0007669"/>
    <property type="project" value="UniProtKB-SubCell"/>
</dbReference>
<dbReference type="GO" id="GO:0016857">
    <property type="term" value="F:racemase and epimerase activity, acting on carbohydrates and derivatives"/>
    <property type="evidence" value="ECO:0007669"/>
    <property type="project" value="UniProtKB-UniRule"/>
</dbReference>
<dbReference type="FunFam" id="2.120.10.80:FF:000061">
    <property type="entry name" value="N-acetylneuraminate epimerase"/>
    <property type="match status" value="1"/>
</dbReference>
<dbReference type="Gene3D" id="2.120.10.80">
    <property type="entry name" value="Kelch-type beta propeller"/>
    <property type="match status" value="2"/>
</dbReference>
<dbReference type="HAMAP" id="MF_01195">
    <property type="entry name" value="NanM"/>
    <property type="match status" value="1"/>
</dbReference>
<dbReference type="InterPro" id="IPR015915">
    <property type="entry name" value="Kelch-typ_b-propeller"/>
</dbReference>
<dbReference type="InterPro" id="IPR056734">
    <property type="entry name" value="NANM"/>
</dbReference>
<dbReference type="InterPro" id="IPR019936">
    <property type="entry name" value="NanM_proteobact"/>
</dbReference>
<dbReference type="NCBIfam" id="TIGR03547">
    <property type="entry name" value="muta_rot_YjhT"/>
    <property type="match status" value="1"/>
</dbReference>
<dbReference type="NCBIfam" id="NF010730">
    <property type="entry name" value="PRK14131.1"/>
    <property type="match status" value="1"/>
</dbReference>
<dbReference type="PANTHER" id="PTHR45632">
    <property type="entry name" value="LD33804P"/>
    <property type="match status" value="1"/>
</dbReference>
<dbReference type="Pfam" id="PF24996">
    <property type="entry name" value="NANM"/>
    <property type="match status" value="1"/>
</dbReference>
<dbReference type="SUPFAM" id="SSF117281">
    <property type="entry name" value="Kelch motif"/>
    <property type="match status" value="1"/>
</dbReference>